<feature type="chain" id="PRO_0000443448" description="Histone acetyltransferase KAT2B">
    <location>
        <begin position="1"/>
        <end position="796"/>
    </location>
</feature>
<feature type="domain" description="N-acetyltransferase" evidence="4">
    <location>
        <begin position="469"/>
        <end position="617"/>
    </location>
</feature>
<feature type="domain" description="Bromo" evidence="3">
    <location>
        <begin position="687"/>
        <end position="791"/>
    </location>
</feature>
<feature type="region of interest" description="Disordered" evidence="5">
    <location>
        <begin position="1"/>
        <end position="32"/>
    </location>
</feature>
<feature type="region of interest" description="Disordered" evidence="5">
    <location>
        <begin position="77"/>
        <end position="97"/>
    </location>
</feature>
<feature type="region of interest" description="Disordered" evidence="5">
    <location>
        <begin position="371"/>
        <end position="408"/>
    </location>
</feature>
<feature type="compositionally biased region" description="Low complexity" evidence="5">
    <location>
        <begin position="10"/>
        <end position="24"/>
    </location>
</feature>
<feature type="compositionally biased region" description="Pro residues" evidence="5">
    <location>
        <begin position="81"/>
        <end position="94"/>
    </location>
</feature>
<feature type="compositionally biased region" description="Basic and acidic residues" evidence="5">
    <location>
        <begin position="392"/>
        <end position="408"/>
    </location>
</feature>
<feature type="active site" description="Proton donor/acceptor" evidence="1">
    <location>
        <position position="536"/>
    </location>
</feature>
<feature type="binding site" evidence="1">
    <location>
        <begin position="540"/>
        <end position="542"/>
    </location>
    <ligand>
        <name>acetyl-CoA</name>
        <dbReference type="ChEBI" id="CHEBI:57288"/>
    </ligand>
</feature>
<feature type="binding site" evidence="1">
    <location>
        <begin position="547"/>
        <end position="553"/>
    </location>
    <ligand>
        <name>acetyl-CoA</name>
        <dbReference type="ChEBI" id="CHEBI:57288"/>
    </ligand>
</feature>
<feature type="binding site" evidence="1">
    <location>
        <begin position="578"/>
        <end position="581"/>
    </location>
    <ligand>
        <name>acetyl-CoA</name>
        <dbReference type="ChEBI" id="CHEBI:57288"/>
    </ligand>
</feature>
<dbReference type="EC" id="2.3.1.48" evidence="2"/>
<dbReference type="EC" id="2.3.1.57" evidence="2"/>
<dbReference type="EMBL" id="BX950869">
    <property type="status" value="NOT_ANNOTATED_CDS"/>
    <property type="molecule type" value="Genomic_DNA"/>
</dbReference>
<dbReference type="EMBL" id="BX957344">
    <property type="status" value="NOT_ANNOTATED_CDS"/>
    <property type="molecule type" value="Genomic_DNA"/>
</dbReference>
<dbReference type="RefSeq" id="NP_001038499.1">
    <property type="nucleotide sequence ID" value="NM_001045034.1"/>
</dbReference>
<dbReference type="SMR" id="Q1LUC3"/>
<dbReference type="FunCoup" id="Q1LUC3">
    <property type="interactions" value="500"/>
</dbReference>
<dbReference type="STRING" id="7955.ENSDARP00000085190"/>
<dbReference type="PaxDb" id="7955-ENSDARP00000085190"/>
<dbReference type="Ensembl" id="ENSDART00000090757">
    <property type="protein sequence ID" value="ENSDARP00000085190"/>
    <property type="gene ID" value="ENSDARG00000062634"/>
</dbReference>
<dbReference type="GeneID" id="563942"/>
<dbReference type="KEGG" id="dre:563942"/>
<dbReference type="AGR" id="ZFIN:ZDB-GENE-060503-207"/>
<dbReference type="CTD" id="8850"/>
<dbReference type="ZFIN" id="ZDB-GENE-060503-207">
    <property type="gene designation" value="kat2b"/>
</dbReference>
<dbReference type="eggNOG" id="KOG1472">
    <property type="taxonomic scope" value="Eukaryota"/>
</dbReference>
<dbReference type="HOGENOM" id="CLU_015901_0_0_1"/>
<dbReference type="InParanoid" id="Q1LUC3"/>
<dbReference type="OMA" id="YFQTKMR"/>
<dbReference type="OrthoDB" id="1937912at2759"/>
<dbReference type="PhylomeDB" id="Q1LUC3"/>
<dbReference type="TreeFam" id="TF105399"/>
<dbReference type="Reactome" id="R-DRE-2032785">
    <property type="pathway name" value="YAP1- and WWTR1 (TAZ)-stimulated gene expression"/>
</dbReference>
<dbReference type="Reactome" id="R-DRE-5689901">
    <property type="pathway name" value="Metalloprotease DUBs"/>
</dbReference>
<dbReference type="Reactome" id="R-DRE-9018519">
    <property type="pathway name" value="Estrogen-dependent gene expression"/>
</dbReference>
<dbReference type="Reactome" id="R-DRE-9617629">
    <property type="pathway name" value="Regulation of FOXO transcriptional activity by acetylation"/>
</dbReference>
<dbReference type="PRO" id="PR:Q1LUC3"/>
<dbReference type="Proteomes" id="UP000000437">
    <property type="component" value="Chromosome 19"/>
</dbReference>
<dbReference type="Bgee" id="ENSDARG00000062634">
    <property type="expression patterns" value="Expressed in retina and 23 other cell types or tissues"/>
</dbReference>
<dbReference type="GO" id="GO:0140672">
    <property type="term" value="C:ATAC complex"/>
    <property type="evidence" value="ECO:0000318"/>
    <property type="project" value="GO_Central"/>
</dbReference>
<dbReference type="GO" id="GO:0005813">
    <property type="term" value="C:centrosome"/>
    <property type="evidence" value="ECO:0000250"/>
    <property type="project" value="UniProtKB"/>
</dbReference>
<dbReference type="GO" id="GO:0005737">
    <property type="term" value="C:cytoplasm"/>
    <property type="evidence" value="ECO:0007669"/>
    <property type="project" value="UniProtKB-KW"/>
</dbReference>
<dbReference type="GO" id="GO:0005634">
    <property type="term" value="C:nucleus"/>
    <property type="evidence" value="ECO:0000250"/>
    <property type="project" value="UniProtKB"/>
</dbReference>
<dbReference type="GO" id="GO:0004145">
    <property type="term" value="F:diamine N-acetyltransferase activity"/>
    <property type="evidence" value="ECO:0007669"/>
    <property type="project" value="UniProtKB-EC"/>
</dbReference>
<dbReference type="GO" id="GO:0010484">
    <property type="term" value="F:histone H3 acetyltransferase activity"/>
    <property type="evidence" value="ECO:0000318"/>
    <property type="project" value="GO_Central"/>
</dbReference>
<dbReference type="GO" id="GO:0043992">
    <property type="term" value="F:histone H3K9 acetyltransferase activity"/>
    <property type="evidence" value="ECO:0000315"/>
    <property type="project" value="UniProtKB"/>
</dbReference>
<dbReference type="GO" id="GO:0061733">
    <property type="term" value="F:protein-lysine-acetyltransferase activity"/>
    <property type="evidence" value="ECO:0000250"/>
    <property type="project" value="UniProtKB"/>
</dbReference>
<dbReference type="GO" id="GO:0060349">
    <property type="term" value="P:bone morphogenesis"/>
    <property type="evidence" value="ECO:0000315"/>
    <property type="project" value="ZFIN"/>
</dbReference>
<dbReference type="GO" id="GO:0006338">
    <property type="term" value="P:chromatin remodeling"/>
    <property type="evidence" value="ECO:0000318"/>
    <property type="project" value="GO_Central"/>
</dbReference>
<dbReference type="GO" id="GO:0040029">
    <property type="term" value="P:epigenetic regulation of gene expression"/>
    <property type="evidence" value="ECO:0000315"/>
    <property type="project" value="GO_Central"/>
</dbReference>
<dbReference type="GO" id="GO:0007507">
    <property type="term" value="P:heart development"/>
    <property type="evidence" value="ECO:0000315"/>
    <property type="project" value="UniProtKB"/>
</dbReference>
<dbReference type="GO" id="GO:0018393">
    <property type="term" value="P:internal peptidyl-lysine acetylation"/>
    <property type="evidence" value="ECO:0000250"/>
    <property type="project" value="UniProtKB"/>
</dbReference>
<dbReference type="GO" id="GO:0060173">
    <property type="term" value="P:limb development"/>
    <property type="evidence" value="ECO:0000315"/>
    <property type="project" value="UniProtKB"/>
</dbReference>
<dbReference type="GO" id="GO:0046600">
    <property type="term" value="P:negative regulation of centriole replication"/>
    <property type="evidence" value="ECO:0000250"/>
    <property type="project" value="UniProtKB"/>
</dbReference>
<dbReference type="GO" id="GO:2000233">
    <property type="term" value="P:negative regulation of rRNA processing"/>
    <property type="evidence" value="ECO:0000250"/>
    <property type="project" value="UniProtKB"/>
</dbReference>
<dbReference type="GO" id="GO:1902425">
    <property type="term" value="P:positive regulation of attachment of mitotic spindle microtubules to kinetochore"/>
    <property type="evidence" value="ECO:0000250"/>
    <property type="project" value="UniProtKB"/>
</dbReference>
<dbReference type="GO" id="GO:0045944">
    <property type="term" value="P:positive regulation of transcription by RNA polymerase II"/>
    <property type="evidence" value="ECO:0000318"/>
    <property type="project" value="GO_Central"/>
</dbReference>
<dbReference type="GO" id="GO:0006473">
    <property type="term" value="P:protein acetylation"/>
    <property type="evidence" value="ECO:0000250"/>
    <property type="project" value="UniProtKB"/>
</dbReference>
<dbReference type="GO" id="GO:1903010">
    <property type="term" value="P:regulation of bone development"/>
    <property type="evidence" value="ECO:0000315"/>
    <property type="project" value="UniProtKB"/>
</dbReference>
<dbReference type="GO" id="GO:0061035">
    <property type="term" value="P:regulation of cartilage development"/>
    <property type="evidence" value="ECO:0000315"/>
    <property type="project" value="UniProtKB"/>
</dbReference>
<dbReference type="GO" id="GO:0048511">
    <property type="term" value="P:rhythmic process"/>
    <property type="evidence" value="ECO:0007669"/>
    <property type="project" value="UniProtKB-KW"/>
</dbReference>
<dbReference type="CDD" id="cd05509">
    <property type="entry name" value="Bromo_gcn5_like"/>
    <property type="match status" value="1"/>
</dbReference>
<dbReference type="CDD" id="cd04301">
    <property type="entry name" value="NAT_SF"/>
    <property type="match status" value="1"/>
</dbReference>
<dbReference type="FunFam" id="3.40.630.30:FF:000004">
    <property type="entry name" value="Histone acetyltransferase KAT2A"/>
    <property type="match status" value="1"/>
</dbReference>
<dbReference type="FunFam" id="1.20.920.10:FF:000014">
    <property type="entry name" value="Histone acetyltransferase KAT2B"/>
    <property type="match status" value="1"/>
</dbReference>
<dbReference type="Gene3D" id="3.40.630.30">
    <property type="match status" value="1"/>
</dbReference>
<dbReference type="Gene3D" id="1.20.920.10">
    <property type="entry name" value="Bromodomain-like"/>
    <property type="match status" value="1"/>
</dbReference>
<dbReference type="InterPro" id="IPR016181">
    <property type="entry name" value="Acyl_CoA_acyltransferase"/>
</dbReference>
<dbReference type="InterPro" id="IPR001487">
    <property type="entry name" value="Bromodomain"/>
</dbReference>
<dbReference type="InterPro" id="IPR036427">
    <property type="entry name" value="Bromodomain-like_sf"/>
</dbReference>
<dbReference type="InterPro" id="IPR018359">
    <property type="entry name" value="Bromodomain_CS"/>
</dbReference>
<dbReference type="InterPro" id="IPR037800">
    <property type="entry name" value="GCN5"/>
</dbReference>
<dbReference type="InterPro" id="IPR016376">
    <property type="entry name" value="GCN5/PCAF"/>
</dbReference>
<dbReference type="InterPro" id="IPR000182">
    <property type="entry name" value="GNAT_dom"/>
</dbReference>
<dbReference type="InterPro" id="IPR009464">
    <property type="entry name" value="PCAF_N"/>
</dbReference>
<dbReference type="PANTHER" id="PTHR45750">
    <property type="entry name" value="GH11602P"/>
    <property type="match status" value="1"/>
</dbReference>
<dbReference type="PANTHER" id="PTHR45750:SF2">
    <property type="entry name" value="HISTONE ACETYLTRANSFERASE KAT2B"/>
    <property type="match status" value="1"/>
</dbReference>
<dbReference type="Pfam" id="PF00583">
    <property type="entry name" value="Acetyltransf_1"/>
    <property type="match status" value="1"/>
</dbReference>
<dbReference type="Pfam" id="PF00439">
    <property type="entry name" value="Bromodomain"/>
    <property type="match status" value="1"/>
</dbReference>
<dbReference type="Pfam" id="PF06466">
    <property type="entry name" value="PCAF_N"/>
    <property type="match status" value="1"/>
</dbReference>
<dbReference type="PIRSF" id="PIRSF003048">
    <property type="entry name" value="Histone_acetylase_PCAF"/>
    <property type="match status" value="1"/>
</dbReference>
<dbReference type="PRINTS" id="PR00503">
    <property type="entry name" value="BROMODOMAIN"/>
</dbReference>
<dbReference type="SMART" id="SM00297">
    <property type="entry name" value="BROMO"/>
    <property type="match status" value="1"/>
</dbReference>
<dbReference type="SUPFAM" id="SSF55729">
    <property type="entry name" value="Acyl-CoA N-acyltransferases (Nat)"/>
    <property type="match status" value="1"/>
</dbReference>
<dbReference type="SUPFAM" id="SSF47370">
    <property type="entry name" value="Bromodomain"/>
    <property type="match status" value="1"/>
</dbReference>
<dbReference type="PROSITE" id="PS00633">
    <property type="entry name" value="BROMODOMAIN_1"/>
    <property type="match status" value="1"/>
</dbReference>
<dbReference type="PROSITE" id="PS50014">
    <property type="entry name" value="BROMODOMAIN_2"/>
    <property type="match status" value="1"/>
</dbReference>
<dbReference type="PROSITE" id="PS51186">
    <property type="entry name" value="GNAT"/>
    <property type="match status" value="1"/>
</dbReference>
<keyword id="KW-0010">Activator</keyword>
<keyword id="KW-0012">Acyltransferase</keyword>
<keyword id="KW-0090">Biological rhythms</keyword>
<keyword id="KW-0103">Bromodomain</keyword>
<keyword id="KW-0131">Cell cycle</keyword>
<keyword id="KW-0963">Cytoplasm</keyword>
<keyword id="KW-0206">Cytoskeleton</keyword>
<keyword id="KW-0539">Nucleus</keyword>
<keyword id="KW-1185">Reference proteome</keyword>
<keyword id="KW-0804">Transcription</keyword>
<keyword id="KW-0805">Transcription regulation</keyword>
<keyword id="KW-0808">Transferase</keyword>
<sequence>MSESTGIPQGSPAVGAAGSAPAAPGVGGTECSGAAVGSARIAVKKAQLRSSPRPKKLEKLGVYSSCKAEGACKCNGWKSQNPPPTPPPPTPPRAEQPTAVSLMEPCRSCSHALGDHVTHLENVSEEEMNRLLGIVLDVEYLYTCVHKEEDPDTKQVYFSLFKLLRKCILQMGRPVVEALESPPFEKPSIEQGVNNFVQYKFSHLPSKERQTIVELAKMFLNQINYWQLETPSQKRQRAPDDDVAGYKVNYTRWLCYCNVPQFCDSLPRYEATQIFGRIFLRSVFTIMRKQLLEQARQEKDKLPPEKRTLILTHFPKFLSMLEEEVYSHNSPIWSENFMIGLSGGQIPTVVSAPPVNRSLYYSSSPAPVELAGGGSVSPARKTASVLEPNPGGEKRKPAEPLSHEDSKRPRVVGDIPMELINEVMSTITDPTAMLGPETSLLSAHSARDEAARLEERRGVIEFHVIGNSLNQKPNKKILMWLVGLQNVFSHQLPRMPKEYITRLVFDPKHKTLSLIKDGRVIGGICFRMFPTQGFTEIVFCAVTSNEQVKGYGTHLMNHLKEYHIKHEILNFLTYADEYAIGYFKKQGFSKDIKVPKSKYVGYIKDYEGATLMGCELNPCIPYTEFSVIIKKQKEIIKKLIERKQAQIRKVYPGLSCFKEGVRQIAIESIPGIRETGWKPLGKSKELKDPDQLYSTLKNILTQVKSHPNAWPFMEPVKKNEAPGYYQVIRFPMDLKTMSERLKSRYYTTRKLFMADMQRIFTNCREYNPPESEYYKCANLLEKFFYTKIKEAGLIDK</sequence>
<comment type="function">
    <text evidence="2 6 7">Functions as a histone acetyltransferase (HAT) to promote transcriptional activation (PubMed:30424580). Has significant histone acetyltransferase activity with core histones (H3 and H4), and also with nucleosome core particles (By similarity). Has a a strong preference for acetylation of H3 at 'Lys-9' (H3K9ac) (By similarity). Also acetylates non-histone proteins (PubMed:29174768). Involved in heart and limb development by mediating acetylation of tbx5 (PubMed:29174768). Also acetylates spermidine (By similarity). Together with kat2a, required for growth and differentiation of craniofacial cartilage and bone by regulating acetylation of histone H3 at 'Lys-9' (H3K9ac) (PubMed:30424580).</text>
</comment>
<comment type="catalytic activity">
    <reaction evidence="2">
        <text>L-lysyl-[histone] + acetyl-CoA = N(6)-acetyl-L-lysyl-[histone] + CoA + H(+)</text>
        <dbReference type="Rhea" id="RHEA:21992"/>
        <dbReference type="Rhea" id="RHEA-COMP:9845"/>
        <dbReference type="Rhea" id="RHEA-COMP:11338"/>
        <dbReference type="ChEBI" id="CHEBI:15378"/>
        <dbReference type="ChEBI" id="CHEBI:29969"/>
        <dbReference type="ChEBI" id="CHEBI:57287"/>
        <dbReference type="ChEBI" id="CHEBI:57288"/>
        <dbReference type="ChEBI" id="CHEBI:61930"/>
        <dbReference type="EC" id="2.3.1.48"/>
    </reaction>
    <physiologicalReaction direction="left-to-right" evidence="2">
        <dbReference type="Rhea" id="RHEA:21993"/>
    </physiologicalReaction>
</comment>
<comment type="catalytic activity">
    <reaction evidence="2">
        <text>L-lysyl-[protein] + acetyl-CoA = N(6)-acetyl-L-lysyl-[protein] + CoA + H(+)</text>
        <dbReference type="Rhea" id="RHEA:45948"/>
        <dbReference type="Rhea" id="RHEA-COMP:9752"/>
        <dbReference type="Rhea" id="RHEA-COMP:10731"/>
        <dbReference type="ChEBI" id="CHEBI:15378"/>
        <dbReference type="ChEBI" id="CHEBI:29969"/>
        <dbReference type="ChEBI" id="CHEBI:57287"/>
        <dbReference type="ChEBI" id="CHEBI:57288"/>
        <dbReference type="ChEBI" id="CHEBI:61930"/>
    </reaction>
    <physiologicalReaction direction="left-to-right" evidence="2">
        <dbReference type="Rhea" id="RHEA:45949"/>
    </physiologicalReaction>
</comment>
<comment type="catalytic activity">
    <reaction evidence="2">
        <text>spermidine + acetyl-CoA = N(8)-acetylspermidine + CoA + H(+)</text>
        <dbReference type="Rhea" id="RHEA:28270"/>
        <dbReference type="ChEBI" id="CHEBI:15378"/>
        <dbReference type="ChEBI" id="CHEBI:57287"/>
        <dbReference type="ChEBI" id="CHEBI:57288"/>
        <dbReference type="ChEBI" id="CHEBI:57834"/>
        <dbReference type="ChEBI" id="CHEBI:58535"/>
        <dbReference type="EC" id="2.3.1.57"/>
    </reaction>
    <physiologicalReaction direction="left-to-right" evidence="2">
        <dbReference type="Rhea" id="RHEA:28271"/>
    </physiologicalReaction>
</comment>
<comment type="subcellular location">
    <subcellularLocation>
        <location evidence="2">Nucleus</location>
    </subcellularLocation>
    <subcellularLocation>
        <location evidence="2">Cytoplasm</location>
        <location evidence="2">Cytoskeleton</location>
        <location evidence="2">Microtubule organizing center</location>
        <location evidence="2">Centrosome</location>
    </subcellularLocation>
    <text evidence="2">Mainly localizes to the nucleus. Also localizes to centrosomes in late G1 and around the G1/S transition, coinciding with the onset of centriole formation. Localizes to sites of DNA damage.</text>
</comment>
<comment type="developmental stage">
    <text evidence="6 7">Widely expressed throughout the anterior head region, including the central nervous system, the eye and branchial arches at 24 hours post fertilization (hpf). Expressed strongly in the brain region, with expression extending posteriorly in the spinal cord. By 40-48 hpf, expression remains strongly expressed in the head region but is reduced throughout the rest of the embryo (PubMed:30424580). Expressed in the heart and tail regions throughout developmental stages (PubMed:29174768).</text>
</comment>
<comment type="disruption phenotype">
    <text evidence="6 7">Craniofacial cartilage and bone defects, characterized by shortening and hypoplastic nature of the cartilage elements and disruption of the posterior ceratobranchial cartilages (PubMed:30424580). Morpholino knockdown of kat2a and kat2b leads to impaired heart and limb development. Abnormal fin development is also observed (PubMed:29174768).</text>
</comment>
<comment type="similarity">
    <text evidence="8">Belongs to the acetyltransferase family. GCN5 subfamily.</text>
</comment>
<protein>
    <recommendedName>
        <fullName evidence="2">Histone acetyltransferase KAT2B</fullName>
        <ecNumber evidence="2">2.3.1.48</ecNumber>
    </recommendedName>
    <alternativeName>
        <fullName evidence="2">Histone acetyltransferase PCAF</fullName>
        <shortName evidence="2">Histone acetylase PCAF</shortName>
    </alternativeName>
    <alternativeName>
        <fullName evidence="2">Lysine acetyltransferase 2B</fullName>
    </alternativeName>
    <alternativeName>
        <fullName evidence="2">P300/CBP-associated factor</fullName>
        <shortName evidence="2">P/CAF</shortName>
    </alternativeName>
    <alternativeName>
        <fullName>Spermidine acetyltransferase KAT2B</fullName>
        <ecNumber evidence="2">2.3.1.57</ecNumber>
    </alternativeName>
</protein>
<name>KAT2B_DANRE</name>
<reference key="1">
    <citation type="journal article" date="2013" name="Nature">
        <title>The zebrafish reference genome sequence and its relationship to the human genome.</title>
        <authorList>
            <person name="Howe K."/>
            <person name="Clark M.D."/>
            <person name="Torroja C.F."/>
            <person name="Torrance J."/>
            <person name="Berthelot C."/>
            <person name="Muffato M."/>
            <person name="Collins J.E."/>
            <person name="Humphray S."/>
            <person name="McLaren K."/>
            <person name="Matthews L."/>
            <person name="McLaren S."/>
            <person name="Sealy I."/>
            <person name="Caccamo M."/>
            <person name="Churcher C."/>
            <person name="Scott C."/>
            <person name="Barrett J.C."/>
            <person name="Koch R."/>
            <person name="Rauch G.J."/>
            <person name="White S."/>
            <person name="Chow W."/>
            <person name="Kilian B."/>
            <person name="Quintais L.T."/>
            <person name="Guerra-Assuncao J.A."/>
            <person name="Zhou Y."/>
            <person name="Gu Y."/>
            <person name="Yen J."/>
            <person name="Vogel J.H."/>
            <person name="Eyre T."/>
            <person name="Redmond S."/>
            <person name="Banerjee R."/>
            <person name="Chi J."/>
            <person name="Fu B."/>
            <person name="Langley E."/>
            <person name="Maguire S.F."/>
            <person name="Laird G.K."/>
            <person name="Lloyd D."/>
            <person name="Kenyon E."/>
            <person name="Donaldson S."/>
            <person name="Sehra H."/>
            <person name="Almeida-King J."/>
            <person name="Loveland J."/>
            <person name="Trevanion S."/>
            <person name="Jones M."/>
            <person name="Quail M."/>
            <person name="Willey D."/>
            <person name="Hunt A."/>
            <person name="Burton J."/>
            <person name="Sims S."/>
            <person name="McLay K."/>
            <person name="Plumb B."/>
            <person name="Davis J."/>
            <person name="Clee C."/>
            <person name="Oliver K."/>
            <person name="Clark R."/>
            <person name="Riddle C."/>
            <person name="Elliot D."/>
            <person name="Threadgold G."/>
            <person name="Harden G."/>
            <person name="Ware D."/>
            <person name="Begum S."/>
            <person name="Mortimore B."/>
            <person name="Kerry G."/>
            <person name="Heath P."/>
            <person name="Phillimore B."/>
            <person name="Tracey A."/>
            <person name="Corby N."/>
            <person name="Dunn M."/>
            <person name="Johnson C."/>
            <person name="Wood J."/>
            <person name="Clark S."/>
            <person name="Pelan S."/>
            <person name="Griffiths G."/>
            <person name="Smith M."/>
            <person name="Glithero R."/>
            <person name="Howden P."/>
            <person name="Barker N."/>
            <person name="Lloyd C."/>
            <person name="Stevens C."/>
            <person name="Harley J."/>
            <person name="Holt K."/>
            <person name="Panagiotidis G."/>
            <person name="Lovell J."/>
            <person name="Beasley H."/>
            <person name="Henderson C."/>
            <person name="Gordon D."/>
            <person name="Auger K."/>
            <person name="Wright D."/>
            <person name="Collins J."/>
            <person name="Raisen C."/>
            <person name="Dyer L."/>
            <person name="Leung K."/>
            <person name="Robertson L."/>
            <person name="Ambridge K."/>
            <person name="Leongamornlert D."/>
            <person name="McGuire S."/>
            <person name="Gilderthorp R."/>
            <person name="Griffiths C."/>
            <person name="Manthravadi D."/>
            <person name="Nichol S."/>
            <person name="Barker G."/>
            <person name="Whitehead S."/>
            <person name="Kay M."/>
            <person name="Brown J."/>
            <person name="Murnane C."/>
            <person name="Gray E."/>
            <person name="Humphries M."/>
            <person name="Sycamore N."/>
            <person name="Barker D."/>
            <person name="Saunders D."/>
            <person name="Wallis J."/>
            <person name="Babbage A."/>
            <person name="Hammond S."/>
            <person name="Mashreghi-Mohammadi M."/>
            <person name="Barr L."/>
            <person name="Martin S."/>
            <person name="Wray P."/>
            <person name="Ellington A."/>
            <person name="Matthews N."/>
            <person name="Ellwood M."/>
            <person name="Woodmansey R."/>
            <person name="Clark G."/>
            <person name="Cooper J."/>
            <person name="Tromans A."/>
            <person name="Grafham D."/>
            <person name="Skuce C."/>
            <person name="Pandian R."/>
            <person name="Andrews R."/>
            <person name="Harrison E."/>
            <person name="Kimberley A."/>
            <person name="Garnett J."/>
            <person name="Fosker N."/>
            <person name="Hall R."/>
            <person name="Garner P."/>
            <person name="Kelly D."/>
            <person name="Bird C."/>
            <person name="Palmer S."/>
            <person name="Gehring I."/>
            <person name="Berger A."/>
            <person name="Dooley C.M."/>
            <person name="Ersan-Urun Z."/>
            <person name="Eser C."/>
            <person name="Geiger H."/>
            <person name="Geisler M."/>
            <person name="Karotki L."/>
            <person name="Kirn A."/>
            <person name="Konantz J."/>
            <person name="Konantz M."/>
            <person name="Oberlander M."/>
            <person name="Rudolph-Geiger S."/>
            <person name="Teucke M."/>
            <person name="Lanz C."/>
            <person name="Raddatz G."/>
            <person name="Osoegawa K."/>
            <person name="Zhu B."/>
            <person name="Rapp A."/>
            <person name="Widaa S."/>
            <person name="Langford C."/>
            <person name="Yang F."/>
            <person name="Schuster S.C."/>
            <person name="Carter N.P."/>
            <person name="Harrow J."/>
            <person name="Ning Z."/>
            <person name="Herrero J."/>
            <person name="Searle S.M."/>
            <person name="Enright A."/>
            <person name="Geisler R."/>
            <person name="Plasterk R.H."/>
            <person name="Lee C."/>
            <person name="Westerfield M."/>
            <person name="de Jong P.J."/>
            <person name="Zon L.I."/>
            <person name="Postlethwait J.H."/>
            <person name="Nusslein-Volhard C."/>
            <person name="Hubbard T.J."/>
            <person name="Roest Crollius H."/>
            <person name="Rogers J."/>
            <person name="Stemple D.L."/>
        </authorList>
    </citation>
    <scope>NUCLEOTIDE SEQUENCE [LARGE SCALE GENOMIC DNA]</scope>
    <source>
        <strain>Tuebingen</strain>
    </source>
</reference>
<reference key="2">
    <citation type="journal article" date="2017" name="J. Mol. Cell. Cardiol.">
        <title>Acetylation of TBX5 by KAT2B and KAT2A regulates heart and limb development.</title>
        <authorList>
            <person name="Ghosh T.K."/>
            <person name="Aparicio-Sanchez J.J."/>
            <person name="Buxton S."/>
            <person name="Ketley A."/>
            <person name="Mohamed T."/>
            <person name="Rutland C.S."/>
            <person name="Loughna S."/>
            <person name="Brook J.D."/>
        </authorList>
    </citation>
    <scope>FUNCTION</scope>
    <scope>DEVELOPMENTAL STAGE</scope>
    <scope>DISRUPTION PHENOTYPE</scope>
</reference>
<reference key="3">
    <citation type="journal article" date="2018" name="J. Dev. Biol.">
        <title>Kat2a and Kat2b acetyltransferase activity regulates craniofacial cartilage and bone differentiation in zebrafish and mice.</title>
        <authorList>
            <person name="Sen R."/>
            <person name="Pezoa S.A."/>
            <person name="Carpio Shull L."/>
            <person name="Hernandez-Lagunas L."/>
            <person name="Niswander L.A."/>
            <person name="Artinger K.B."/>
        </authorList>
    </citation>
    <scope>FUNCTION</scope>
    <scope>DEVELOPMENTAL STAGE</scope>
    <scope>DISRUPTION PHENOTYPE</scope>
</reference>
<organism>
    <name type="scientific">Danio rerio</name>
    <name type="common">Zebrafish</name>
    <name type="synonym">Brachydanio rerio</name>
    <dbReference type="NCBI Taxonomy" id="7955"/>
    <lineage>
        <taxon>Eukaryota</taxon>
        <taxon>Metazoa</taxon>
        <taxon>Chordata</taxon>
        <taxon>Craniata</taxon>
        <taxon>Vertebrata</taxon>
        <taxon>Euteleostomi</taxon>
        <taxon>Actinopterygii</taxon>
        <taxon>Neopterygii</taxon>
        <taxon>Teleostei</taxon>
        <taxon>Ostariophysi</taxon>
        <taxon>Cypriniformes</taxon>
        <taxon>Danionidae</taxon>
        <taxon>Danioninae</taxon>
        <taxon>Danio</taxon>
    </lineage>
</organism>
<accession>Q1LUC3</accession>
<evidence type="ECO:0000250" key="1">
    <source>
        <dbReference type="UniProtKB" id="Q92830"/>
    </source>
</evidence>
<evidence type="ECO:0000250" key="2">
    <source>
        <dbReference type="UniProtKB" id="Q92831"/>
    </source>
</evidence>
<evidence type="ECO:0000255" key="3">
    <source>
        <dbReference type="PROSITE-ProRule" id="PRU00035"/>
    </source>
</evidence>
<evidence type="ECO:0000255" key="4">
    <source>
        <dbReference type="PROSITE-ProRule" id="PRU00532"/>
    </source>
</evidence>
<evidence type="ECO:0000256" key="5">
    <source>
        <dbReference type="SAM" id="MobiDB-lite"/>
    </source>
</evidence>
<evidence type="ECO:0000269" key="6">
    <source>
    </source>
</evidence>
<evidence type="ECO:0000269" key="7">
    <source>
    </source>
</evidence>
<evidence type="ECO:0000305" key="8"/>
<evidence type="ECO:0000312" key="9">
    <source>
        <dbReference type="ZFIN" id="ZDB-GENE-060503-207"/>
    </source>
</evidence>
<proteinExistence type="evidence at transcript level"/>
<gene>
    <name evidence="9" type="primary">kat2b</name>
</gene>